<comment type="function">
    <text evidence="2">RNA-dependent RNA polymerase which is responsible for replication and transcription of virus RNA segments. The transcription of viral mRNAs occurs by a unique mechanism called cap-snatching. 5' methylated caps of cellular mRNAs are cleaved after 10-13 nucleotides by PA. In turn, these short capped RNAs are used as primers by PB1 for transcription of viral mRNAs. During virus replication, PB1 initiates RNA synthesis and copy vRNA into complementary RNA (cRNA) which in turn serves as a template for the production of more vRNAs.</text>
</comment>
<comment type="catalytic activity">
    <reaction evidence="2">
        <text>RNA(n) + a ribonucleoside 5'-triphosphate = RNA(n+1) + diphosphate</text>
        <dbReference type="Rhea" id="RHEA:21248"/>
        <dbReference type="Rhea" id="RHEA-COMP:14527"/>
        <dbReference type="Rhea" id="RHEA-COMP:17342"/>
        <dbReference type="ChEBI" id="CHEBI:33019"/>
        <dbReference type="ChEBI" id="CHEBI:61557"/>
        <dbReference type="ChEBI" id="CHEBI:140395"/>
        <dbReference type="EC" id="2.7.7.48"/>
    </reaction>
</comment>
<comment type="subunit">
    <text evidence="1 2">Influenza RNA polymerase is composed of three subunits: PB1, PB2 and PA. Interacts (via N-terminus) with PA (via C-terminus). Interacts (via C-terminus) with PB2 (via N-terminus); this interaction is essential for transcription initiation. Interacts (via C-terminus) with human PKP2 (via N-terminus); the interaction competitively inhibits the interaction between the RNA polymerase subunits PB1 and PB2 (By similarity).</text>
</comment>
<comment type="subcellular location">
    <subcellularLocation>
        <location evidence="2">Host nucleus</location>
    </subcellularLocation>
    <subcellularLocation>
        <location evidence="2">Host cytoplasm</location>
    </subcellularLocation>
</comment>
<comment type="PTM">
    <text evidence="2">Phosphorylated by host PRKCA.</text>
</comment>
<comment type="similarity">
    <text evidence="2">Belongs to the influenza viruses polymerase PB1 family.</text>
</comment>
<keyword id="KW-1262">Eukaryotic host gene expression shutoff by virus</keyword>
<keyword id="KW-1191">Eukaryotic host transcription shutoff by virus</keyword>
<keyword id="KW-1035">Host cytoplasm</keyword>
<keyword id="KW-1190">Host gene expression shutoff by virus</keyword>
<keyword id="KW-1048">Host nucleus</keyword>
<keyword id="KW-0945">Host-virus interaction</keyword>
<keyword id="KW-1104">Inhibition of host RNA polymerase II by virus</keyword>
<keyword id="KW-0547">Nucleotide-binding</keyword>
<keyword id="KW-0548">Nucleotidyltransferase</keyword>
<keyword id="KW-0597">Phosphoprotein</keyword>
<keyword id="KW-0696">RNA-directed RNA polymerase</keyword>
<keyword id="KW-0808">Transferase</keyword>
<keyword id="KW-0693">Viral RNA replication</keyword>
<keyword id="KW-1195">Viral transcription</keyword>
<proteinExistence type="inferred from homology"/>
<feature type="chain" id="PRO_0000373049" description="RNA-directed RNA polymerase catalytic subunit">
    <location>
        <begin position="1"/>
        <end position="757"/>
    </location>
</feature>
<feature type="domain" description="RdRp catalytic" evidence="2">
    <location>
        <begin position="286"/>
        <end position="483"/>
    </location>
</feature>
<feature type="region of interest" description="Disordered" evidence="3">
    <location>
        <begin position="53"/>
        <end position="82"/>
    </location>
</feature>
<feature type="region of interest" description="Promoter-binding site" evidence="2">
    <location>
        <begin position="249"/>
        <end position="256"/>
    </location>
</feature>
<feature type="short sequence motif" description="Nuclear localization signal" evidence="2">
    <location>
        <begin position="187"/>
        <end position="195"/>
    </location>
</feature>
<feature type="short sequence motif" description="Nuclear localization signal" evidence="2">
    <location>
        <begin position="203"/>
        <end position="216"/>
    </location>
</feature>
<feature type="compositionally biased region" description="Polar residues" evidence="3">
    <location>
        <begin position="55"/>
        <end position="64"/>
    </location>
</feature>
<name>RDRP_I43A0</name>
<accession>A4GCL6</accession>
<reference key="1">
    <citation type="submission" date="2007-03" db="EMBL/GenBank/DDBJ databases">
        <title>The NIAID influenza genome sequencing project.</title>
        <authorList>
            <person name="Ghedin E."/>
            <person name="Spiro D."/>
            <person name="Miller N."/>
            <person name="Zaborsky J."/>
            <person name="Feldblyum T."/>
            <person name="Subbu V."/>
            <person name="Shumway M."/>
            <person name="Sparenborg J."/>
            <person name="Groveman L."/>
            <person name="Halpin R."/>
            <person name="Sitz J."/>
            <person name="Koo H."/>
            <person name="Salzberg S.L."/>
            <person name="Webster R.G."/>
            <person name="Hoffmann E."/>
            <person name="Krauss S."/>
            <person name="Naeve C."/>
            <person name="Bao Y."/>
            <person name="Bolotov P."/>
            <person name="Dernovoy D."/>
            <person name="Kiryutin B."/>
            <person name="Lipman D.J."/>
            <person name="Tatusova T."/>
        </authorList>
    </citation>
    <scope>NUCLEOTIDE SEQUENCE [GENOMIC RNA]</scope>
</reference>
<reference key="2">
    <citation type="submission" date="2007-03" db="EMBL/GenBank/DDBJ databases">
        <authorList>
            <consortium name="The NIAID Influenza Genome Sequencing Consortium"/>
        </authorList>
    </citation>
    <scope>NUCLEOTIDE SEQUENCE [GENOMIC RNA]</scope>
</reference>
<protein>
    <recommendedName>
        <fullName evidence="2">RNA-directed RNA polymerase catalytic subunit</fullName>
        <ecNumber evidence="2">2.7.7.48</ecNumber>
    </recommendedName>
    <alternativeName>
        <fullName evidence="2">Polymerase basic protein 1</fullName>
        <shortName evidence="2">PB1</shortName>
    </alternativeName>
    <alternativeName>
        <fullName evidence="2">RNA-directed RNA polymerase subunit P1</fullName>
    </alternativeName>
</protein>
<organism>
    <name type="scientific">Influenza A virus (strain A/USA:Iowa/1943 H1N1)</name>
    <dbReference type="NCBI Taxonomy" id="425563"/>
    <lineage>
        <taxon>Viruses</taxon>
        <taxon>Riboviria</taxon>
        <taxon>Orthornavirae</taxon>
        <taxon>Negarnaviricota</taxon>
        <taxon>Polyploviricotina</taxon>
        <taxon>Insthoviricetes</taxon>
        <taxon>Articulavirales</taxon>
        <taxon>Orthomyxoviridae</taxon>
        <taxon>Alphainfluenzavirus</taxon>
        <taxon>Alphainfluenzavirus influenzae</taxon>
        <taxon>Influenza A virus</taxon>
    </lineage>
</organism>
<evidence type="ECO:0000250" key="1">
    <source>
        <dbReference type="UniProtKB" id="P03431"/>
    </source>
</evidence>
<evidence type="ECO:0000255" key="2">
    <source>
        <dbReference type="HAMAP-Rule" id="MF_04065"/>
    </source>
</evidence>
<evidence type="ECO:0000256" key="3">
    <source>
        <dbReference type="SAM" id="MobiDB-lite"/>
    </source>
</evidence>
<sequence>MDVNPTLLFLKVPAQNAISTTFPYTGDPPYSHGTGTGYTMDTVNRTHQYSERGRWTTNTETGAPQLNPIDGPLPEDNEPSGYAQTDCVLEAMAFLEESHPGIFENSCIETMEVVQQTRVDKLTQGRQTYDWTLNRNQPAATALANTIEVFRSNGLTANESGRLIDFLKDVMESMDKEEMEITTHFQRKRRVRDNVTKKMVTQRTIGKRKQRLNKRSYLIRALTLNTMTKDAERGKLKRRAIATPGMQIRGFVYFVETLARSICEKLEQSGLPVGGNEKKAKLANVVRKMMTNSQDTEISFTITGDNTKWNENQNPRMFLAMITYMTRNQPEWFRNVLSIAPIMFSNKMARLGKGYMFESKSMKLRTQIPAEMLANIDLKYFNDSTRKKIEKIRPLLIDGTASLSPGMMMGMFNMLSTVLGVSILNLGQKRYTKTTYWWDGLQSSDDFALIVNAPNHEGIQAGVDRFYRTCKLLGINMSKKKSYINRTGTFEFTSFFYRYGFVANFSMELPSFGVSGINESADMSIGVTVIKNNMINNDLGPATAQMALQLFIKDYRYTYRCHRGDTQIQTRRSFEIKKLWEQTRSKAGLLVSDGGPNLFNIRNLHIPEVCLKWELMDEDYQGRLCNPLNPFVSHKEIESVNNAVMMPAHGPAKNMEYDAVATTHSWIPKRNRSILNTSQRGILEDEQMYQRCCNLFEKFFPSSSYRRPVGISSMVEAMVSRARIDARIDFESGRIKKEEFTEIMKICSTIEELRRQK</sequence>
<organismHost>
    <name type="scientific">Aves</name>
    <dbReference type="NCBI Taxonomy" id="8782"/>
</organismHost>
<organismHost>
    <name type="scientific">Homo sapiens</name>
    <name type="common">Human</name>
    <dbReference type="NCBI Taxonomy" id="9606"/>
</organismHost>
<organismHost>
    <name type="scientific">Sus scrofa</name>
    <name type="common">Pig</name>
    <dbReference type="NCBI Taxonomy" id="9823"/>
</organismHost>
<gene>
    <name evidence="2" type="primary">PB1</name>
</gene>
<dbReference type="EC" id="2.7.7.48" evidence="2"/>
<dbReference type="EMBL" id="CY020467">
    <property type="protein sequence ID" value="ABO38381.1"/>
    <property type="molecule type" value="Viral_cRNA"/>
</dbReference>
<dbReference type="SMR" id="A4GCL6"/>
<dbReference type="Proteomes" id="UP000008432">
    <property type="component" value="Genome"/>
</dbReference>
<dbReference type="GO" id="GO:0030430">
    <property type="term" value="C:host cell cytoplasm"/>
    <property type="evidence" value="ECO:0007669"/>
    <property type="project" value="UniProtKB-SubCell"/>
</dbReference>
<dbReference type="GO" id="GO:0042025">
    <property type="term" value="C:host cell nucleus"/>
    <property type="evidence" value="ECO:0007669"/>
    <property type="project" value="UniProtKB-SubCell"/>
</dbReference>
<dbReference type="GO" id="GO:0000166">
    <property type="term" value="F:nucleotide binding"/>
    <property type="evidence" value="ECO:0007669"/>
    <property type="project" value="UniProtKB-UniRule"/>
</dbReference>
<dbReference type="GO" id="GO:0003723">
    <property type="term" value="F:RNA binding"/>
    <property type="evidence" value="ECO:0007669"/>
    <property type="project" value="InterPro"/>
</dbReference>
<dbReference type="GO" id="GO:0003968">
    <property type="term" value="F:RNA-directed RNA polymerase activity"/>
    <property type="evidence" value="ECO:0007669"/>
    <property type="project" value="UniProtKB-UniRule"/>
</dbReference>
<dbReference type="GO" id="GO:0006351">
    <property type="term" value="P:DNA-templated transcription"/>
    <property type="evidence" value="ECO:0007669"/>
    <property type="project" value="UniProtKB-UniRule"/>
</dbReference>
<dbReference type="GO" id="GO:0039657">
    <property type="term" value="P:symbiont-mediated suppression of host gene expression"/>
    <property type="evidence" value="ECO:0007669"/>
    <property type="project" value="UniProtKB-KW"/>
</dbReference>
<dbReference type="GO" id="GO:0039523">
    <property type="term" value="P:symbiont-mediated suppression of host mRNA transcription via inhibition of RNA polymerase II activity"/>
    <property type="evidence" value="ECO:0007669"/>
    <property type="project" value="UniProtKB-UniRule"/>
</dbReference>
<dbReference type="GO" id="GO:0039694">
    <property type="term" value="P:viral RNA genome replication"/>
    <property type="evidence" value="ECO:0007669"/>
    <property type="project" value="UniProtKB-UniRule"/>
</dbReference>
<dbReference type="GO" id="GO:0019083">
    <property type="term" value="P:viral transcription"/>
    <property type="evidence" value="ECO:0007669"/>
    <property type="project" value="UniProtKB-KW"/>
</dbReference>
<dbReference type="Gene3D" id="6.10.140.720">
    <property type="match status" value="1"/>
</dbReference>
<dbReference type="HAMAP" id="MF_04065">
    <property type="entry name" value="INFV_RDRP"/>
    <property type="match status" value="1"/>
</dbReference>
<dbReference type="InterPro" id="IPR007099">
    <property type="entry name" value="RNA-dir_pol_NSvirus"/>
</dbReference>
<dbReference type="InterPro" id="IPR001407">
    <property type="entry name" value="RNA_pol_PB1_influenza"/>
</dbReference>
<dbReference type="Pfam" id="PF00602">
    <property type="entry name" value="Flu_PB1"/>
    <property type="match status" value="1"/>
</dbReference>
<dbReference type="PIRSF" id="PIRSF000827">
    <property type="entry name" value="RdRPol_OMV"/>
    <property type="match status" value="1"/>
</dbReference>
<dbReference type="PROSITE" id="PS50525">
    <property type="entry name" value="RDRP_SSRNA_NEG_SEG"/>
    <property type="match status" value="1"/>
</dbReference>